<sequence length="310" mass="34518">MSVDSVYKYIVFDVIRNIKSNIKNDSDTENVDESIIDEIQTMWLDRLTQTGAISNQNDPDETTATTTTTQPQSTLSTVEHENVRNTLNSLIQLNNKSQTTTTTTTSTFGNPQQYLPPQKEVSNGTSPTMNSSNGSNNNNNNNNSNNSSNSSNNNNLPSSLRSIMNPMPQNDGTLDESDNDDDNNNNNNDNDNENNKDNIDKLIIDGFKKNFNFNGDEVIPQNDGLNDDDDLDDEEIGGGGGKVEEDSLGSDLDDDDDDDPDPIIEHFVLCQYEKVSRIKNKRKCNFKDGIMHLNGKDTLFNKANGEMIWN</sequence>
<proteinExistence type="inferred from homology"/>
<accession>Q54G80</accession>
<keyword id="KW-0539">Nucleus</keyword>
<keyword id="KW-1185">Reference proteome</keyword>
<keyword id="KW-0804">Transcription</keyword>
<keyword id="KW-0805">Transcription regulation</keyword>
<evidence type="ECO:0000250" key="1"/>
<evidence type="ECO:0000256" key="2">
    <source>
        <dbReference type="SAM" id="MobiDB-lite"/>
    </source>
</evidence>
<evidence type="ECO:0000305" key="3"/>
<feature type="chain" id="PRO_0000328131" description="Transcription initiation factor IIA subunit 1">
    <location>
        <begin position="1"/>
        <end position="310"/>
    </location>
</feature>
<feature type="region of interest" description="Disordered" evidence="2">
    <location>
        <begin position="52"/>
        <end position="78"/>
    </location>
</feature>
<feature type="region of interest" description="Disordered" evidence="2">
    <location>
        <begin position="91"/>
        <end position="197"/>
    </location>
</feature>
<feature type="region of interest" description="Disordered" evidence="2">
    <location>
        <begin position="218"/>
        <end position="261"/>
    </location>
</feature>
<feature type="compositionally biased region" description="Low complexity" evidence="2">
    <location>
        <begin position="62"/>
        <end position="77"/>
    </location>
</feature>
<feature type="compositionally biased region" description="Low complexity" evidence="2">
    <location>
        <begin position="122"/>
        <end position="160"/>
    </location>
</feature>
<feature type="compositionally biased region" description="Acidic residues" evidence="2">
    <location>
        <begin position="173"/>
        <end position="183"/>
    </location>
</feature>
<feature type="compositionally biased region" description="Acidic residues" evidence="2">
    <location>
        <begin position="225"/>
        <end position="236"/>
    </location>
</feature>
<feature type="compositionally biased region" description="Acidic residues" evidence="2">
    <location>
        <begin position="246"/>
        <end position="261"/>
    </location>
</feature>
<gene>
    <name type="primary">gtf2a1</name>
    <name type="synonym">tfiial</name>
    <name type="ORF">DDB_G0290327</name>
</gene>
<name>TF2AA_DICDI</name>
<reference key="1">
    <citation type="journal article" date="2005" name="Nature">
        <title>The genome of the social amoeba Dictyostelium discoideum.</title>
        <authorList>
            <person name="Eichinger L."/>
            <person name="Pachebat J.A."/>
            <person name="Gloeckner G."/>
            <person name="Rajandream M.A."/>
            <person name="Sucgang R."/>
            <person name="Berriman M."/>
            <person name="Song J."/>
            <person name="Olsen R."/>
            <person name="Szafranski K."/>
            <person name="Xu Q."/>
            <person name="Tunggal B."/>
            <person name="Kummerfeld S."/>
            <person name="Madera M."/>
            <person name="Konfortov B.A."/>
            <person name="Rivero F."/>
            <person name="Bankier A.T."/>
            <person name="Lehmann R."/>
            <person name="Hamlin N."/>
            <person name="Davies R."/>
            <person name="Gaudet P."/>
            <person name="Fey P."/>
            <person name="Pilcher K."/>
            <person name="Chen G."/>
            <person name="Saunders D."/>
            <person name="Sodergren E.J."/>
            <person name="Davis P."/>
            <person name="Kerhornou A."/>
            <person name="Nie X."/>
            <person name="Hall N."/>
            <person name="Anjard C."/>
            <person name="Hemphill L."/>
            <person name="Bason N."/>
            <person name="Farbrother P."/>
            <person name="Desany B."/>
            <person name="Just E."/>
            <person name="Morio T."/>
            <person name="Rost R."/>
            <person name="Churcher C.M."/>
            <person name="Cooper J."/>
            <person name="Haydock S."/>
            <person name="van Driessche N."/>
            <person name="Cronin A."/>
            <person name="Goodhead I."/>
            <person name="Muzny D.M."/>
            <person name="Mourier T."/>
            <person name="Pain A."/>
            <person name="Lu M."/>
            <person name="Harper D."/>
            <person name="Lindsay R."/>
            <person name="Hauser H."/>
            <person name="James K.D."/>
            <person name="Quiles M."/>
            <person name="Madan Babu M."/>
            <person name="Saito T."/>
            <person name="Buchrieser C."/>
            <person name="Wardroper A."/>
            <person name="Felder M."/>
            <person name="Thangavelu M."/>
            <person name="Johnson D."/>
            <person name="Knights A."/>
            <person name="Loulseged H."/>
            <person name="Mungall K.L."/>
            <person name="Oliver K."/>
            <person name="Price C."/>
            <person name="Quail M.A."/>
            <person name="Urushihara H."/>
            <person name="Hernandez J."/>
            <person name="Rabbinowitsch E."/>
            <person name="Steffen D."/>
            <person name="Sanders M."/>
            <person name="Ma J."/>
            <person name="Kohara Y."/>
            <person name="Sharp S."/>
            <person name="Simmonds M.N."/>
            <person name="Spiegler S."/>
            <person name="Tivey A."/>
            <person name="Sugano S."/>
            <person name="White B."/>
            <person name="Walker D."/>
            <person name="Woodward J.R."/>
            <person name="Winckler T."/>
            <person name="Tanaka Y."/>
            <person name="Shaulsky G."/>
            <person name="Schleicher M."/>
            <person name="Weinstock G.M."/>
            <person name="Rosenthal A."/>
            <person name="Cox E.C."/>
            <person name="Chisholm R.L."/>
            <person name="Gibbs R.A."/>
            <person name="Loomis W.F."/>
            <person name="Platzer M."/>
            <person name="Kay R.R."/>
            <person name="Williams J.G."/>
            <person name="Dear P.H."/>
            <person name="Noegel A.A."/>
            <person name="Barrell B.G."/>
            <person name="Kuspa A."/>
        </authorList>
    </citation>
    <scope>NUCLEOTIDE SEQUENCE [LARGE SCALE GENOMIC DNA]</scope>
    <source>
        <strain>AX4</strain>
    </source>
</reference>
<comment type="function">
    <text evidence="1">TFIIA is a component of the transcription machinery of RNA polymerase II and plays an important role in transcriptional activation. TFIIA in a complex with tbp mediates transcriptional activity (By similarity).</text>
</comment>
<comment type="subunit">
    <text evidence="1">TFIIA is a heterodimer of the large subunit 1 and a small subunit gamma.</text>
</comment>
<comment type="subcellular location">
    <subcellularLocation>
        <location evidence="1">Nucleus</location>
    </subcellularLocation>
</comment>
<comment type="similarity">
    <text evidence="3">Belongs to the TFIIA subunit 1 family.</text>
</comment>
<organism>
    <name type="scientific">Dictyostelium discoideum</name>
    <name type="common">Social amoeba</name>
    <dbReference type="NCBI Taxonomy" id="44689"/>
    <lineage>
        <taxon>Eukaryota</taxon>
        <taxon>Amoebozoa</taxon>
        <taxon>Evosea</taxon>
        <taxon>Eumycetozoa</taxon>
        <taxon>Dictyostelia</taxon>
        <taxon>Dictyosteliales</taxon>
        <taxon>Dictyosteliaceae</taxon>
        <taxon>Dictyostelium</taxon>
    </lineage>
</organism>
<protein>
    <recommendedName>
        <fullName>Transcription initiation factor IIA subunit 1</fullName>
    </recommendedName>
    <alternativeName>
        <fullName>General transcription factor IIA subunit 1</fullName>
    </alternativeName>
</protein>
<dbReference type="EMBL" id="AAFI02000162">
    <property type="protein sequence ID" value="EAL62290.1"/>
    <property type="molecule type" value="Genomic_DNA"/>
</dbReference>
<dbReference type="RefSeq" id="XP_635803.1">
    <property type="nucleotide sequence ID" value="XM_630711.1"/>
</dbReference>
<dbReference type="SMR" id="Q54G80"/>
<dbReference type="FunCoup" id="Q54G80">
    <property type="interactions" value="13"/>
</dbReference>
<dbReference type="STRING" id="44689.Q54G80"/>
<dbReference type="PaxDb" id="44689-DDB0216284"/>
<dbReference type="EnsemblProtists" id="EAL62290">
    <property type="protein sequence ID" value="EAL62290"/>
    <property type="gene ID" value="DDB_G0290327"/>
</dbReference>
<dbReference type="GeneID" id="8627608"/>
<dbReference type="KEGG" id="ddi:DDB_G0290327"/>
<dbReference type="dictyBase" id="DDB_G0290327">
    <property type="gene designation" value="gtf2a1"/>
</dbReference>
<dbReference type="VEuPathDB" id="AmoebaDB:DDB_G0290327"/>
<dbReference type="eggNOG" id="KOG2652">
    <property type="taxonomic scope" value="Eukaryota"/>
</dbReference>
<dbReference type="HOGENOM" id="CLU_030027_0_0_1"/>
<dbReference type="InParanoid" id="Q54G80"/>
<dbReference type="OMA" id="QKCTGEA"/>
<dbReference type="Reactome" id="R-DDI-674695">
    <property type="pathway name" value="RNA Polymerase II Pre-transcription Events"/>
</dbReference>
<dbReference type="Reactome" id="R-DDI-6807505">
    <property type="pathway name" value="RNA polymerase II transcribes snRNA genes"/>
</dbReference>
<dbReference type="Reactome" id="R-DDI-73776">
    <property type="pathway name" value="RNA Polymerase II Promoter Escape"/>
</dbReference>
<dbReference type="Reactome" id="R-DDI-73779">
    <property type="pathway name" value="RNA Polymerase II Transcription Pre-Initiation And Promoter Opening"/>
</dbReference>
<dbReference type="Reactome" id="R-DDI-75953">
    <property type="pathway name" value="RNA Polymerase II Transcription Initiation"/>
</dbReference>
<dbReference type="Reactome" id="R-DDI-76042">
    <property type="pathway name" value="RNA Polymerase II Transcription Initiation And Promoter Clearance"/>
</dbReference>
<dbReference type="Reactome" id="R-DDI-9018519">
    <property type="pathway name" value="Estrogen-dependent gene expression"/>
</dbReference>
<dbReference type="PRO" id="PR:Q54G80"/>
<dbReference type="Proteomes" id="UP000002195">
    <property type="component" value="Chromosome 5"/>
</dbReference>
<dbReference type="GO" id="GO:0005672">
    <property type="term" value="C:transcription factor TFIIA complex"/>
    <property type="evidence" value="ECO:0000250"/>
    <property type="project" value="dictyBase"/>
</dbReference>
<dbReference type="GO" id="GO:0006366">
    <property type="term" value="P:transcription by RNA polymerase II"/>
    <property type="evidence" value="ECO:0000318"/>
    <property type="project" value="GO_Central"/>
</dbReference>
<dbReference type="GO" id="GO:0006367">
    <property type="term" value="P:transcription initiation at RNA polymerase II promoter"/>
    <property type="evidence" value="ECO:0000250"/>
    <property type="project" value="dictyBase"/>
</dbReference>
<dbReference type="CDD" id="cd07976">
    <property type="entry name" value="TFIIA_alpha_beta_like"/>
    <property type="match status" value="1"/>
</dbReference>
<dbReference type="FunFam" id="1.10.287.100:FF:000005">
    <property type="entry name" value="Transcription initiation factor IIA subunit 1"/>
    <property type="match status" value="1"/>
</dbReference>
<dbReference type="Gene3D" id="1.10.287.100">
    <property type="match status" value="1"/>
</dbReference>
<dbReference type="Gene3D" id="2.30.18.10">
    <property type="entry name" value="Transcription factor IIA (TFIIA), beta-barrel domain"/>
    <property type="match status" value="1"/>
</dbReference>
<dbReference type="InterPro" id="IPR004855">
    <property type="entry name" value="TFIIA_asu/bsu"/>
</dbReference>
<dbReference type="InterPro" id="IPR009088">
    <property type="entry name" value="TFIIA_b-brl"/>
</dbReference>
<dbReference type="PANTHER" id="PTHR12694">
    <property type="entry name" value="TRANSCRIPTION INITIATION FACTOR IIA SUBUNIT 1"/>
    <property type="match status" value="1"/>
</dbReference>
<dbReference type="PANTHER" id="PTHR12694:SF8">
    <property type="entry name" value="TRANSCRIPTION INITIATION FACTOR IIA SUBUNIT 1"/>
    <property type="match status" value="1"/>
</dbReference>
<dbReference type="Pfam" id="PF03153">
    <property type="entry name" value="TFIIA"/>
    <property type="match status" value="1"/>
</dbReference>
<dbReference type="SMART" id="SM01371">
    <property type="entry name" value="TFIIA"/>
    <property type="match status" value="1"/>
</dbReference>
<dbReference type="SUPFAM" id="SSF50784">
    <property type="entry name" value="Transcription factor IIA (TFIIA), beta-barrel domain"/>
    <property type="match status" value="1"/>
</dbReference>